<gene>
    <name evidence="1" type="primary">queF</name>
    <name type="ordered locus">slr0711</name>
</gene>
<keyword id="KW-0963">Cytoplasm</keyword>
<keyword id="KW-0521">NADP</keyword>
<keyword id="KW-0560">Oxidoreductase</keyword>
<keyword id="KW-0671">Queuosine biosynthesis</keyword>
<keyword id="KW-1185">Reference proteome</keyword>
<accession>Q55978</accession>
<feature type="chain" id="PRO_0000163013" description="NADPH-dependent 7-cyano-7-deazaguanine reductase">
    <location>
        <begin position="1"/>
        <end position="137"/>
    </location>
</feature>
<feature type="active site" description="Thioimide intermediate" evidence="1">
    <location>
        <position position="50"/>
    </location>
</feature>
<feature type="active site" description="Proton donor" evidence="1">
    <location>
        <position position="57"/>
    </location>
</feature>
<feature type="binding site" evidence="1">
    <location>
        <begin position="72"/>
        <end position="74"/>
    </location>
    <ligand>
        <name>substrate</name>
    </ligand>
</feature>
<feature type="binding site" evidence="1">
    <location>
        <begin position="91"/>
        <end position="92"/>
    </location>
    <ligand>
        <name>substrate</name>
    </ligand>
</feature>
<comment type="function">
    <text evidence="1">Catalyzes the NADPH-dependent reduction of 7-cyano-7-deazaguanine (preQ0) to 7-aminomethyl-7-deazaguanine (preQ1).</text>
</comment>
<comment type="catalytic activity">
    <reaction evidence="1">
        <text>7-aminomethyl-7-carbaguanine + 2 NADP(+) = 7-cyano-7-deazaguanine + 2 NADPH + 3 H(+)</text>
        <dbReference type="Rhea" id="RHEA:13409"/>
        <dbReference type="ChEBI" id="CHEBI:15378"/>
        <dbReference type="ChEBI" id="CHEBI:45075"/>
        <dbReference type="ChEBI" id="CHEBI:57783"/>
        <dbReference type="ChEBI" id="CHEBI:58349"/>
        <dbReference type="ChEBI" id="CHEBI:58703"/>
        <dbReference type="EC" id="1.7.1.13"/>
    </reaction>
</comment>
<comment type="pathway">
    <text evidence="1">tRNA modification; tRNA-queuosine biosynthesis.</text>
</comment>
<comment type="subcellular location">
    <subcellularLocation>
        <location evidence="1">Cytoplasm</location>
    </subcellularLocation>
</comment>
<comment type="similarity">
    <text evidence="1">Belongs to the GTP cyclohydrolase I family. QueF type 1 subfamily.</text>
</comment>
<evidence type="ECO:0000255" key="1">
    <source>
        <dbReference type="HAMAP-Rule" id="MF_00818"/>
    </source>
</evidence>
<reference key="1">
    <citation type="journal article" date="1996" name="DNA Res.">
        <title>Sequence analysis of the genome of the unicellular cyanobacterium Synechocystis sp. strain PCC6803. II. Sequence determination of the entire genome and assignment of potential protein-coding regions.</title>
        <authorList>
            <person name="Kaneko T."/>
            <person name="Sato S."/>
            <person name="Kotani H."/>
            <person name="Tanaka A."/>
            <person name="Asamizu E."/>
            <person name="Nakamura Y."/>
            <person name="Miyajima N."/>
            <person name="Hirosawa M."/>
            <person name="Sugiura M."/>
            <person name="Sasamoto S."/>
            <person name="Kimura T."/>
            <person name="Hosouchi T."/>
            <person name="Matsuno A."/>
            <person name="Muraki A."/>
            <person name="Nakazaki N."/>
            <person name="Naruo K."/>
            <person name="Okumura S."/>
            <person name="Shimpo S."/>
            <person name="Takeuchi C."/>
            <person name="Wada T."/>
            <person name="Watanabe A."/>
            <person name="Yamada M."/>
            <person name="Yasuda M."/>
            <person name="Tabata S."/>
        </authorList>
    </citation>
    <scope>NUCLEOTIDE SEQUENCE [LARGE SCALE GENOMIC DNA]</scope>
    <source>
        <strain>ATCC 27184 / PCC 6803 / Kazusa</strain>
    </source>
</reference>
<organism>
    <name type="scientific">Synechocystis sp. (strain ATCC 27184 / PCC 6803 / Kazusa)</name>
    <dbReference type="NCBI Taxonomy" id="1111708"/>
    <lineage>
        <taxon>Bacteria</taxon>
        <taxon>Bacillati</taxon>
        <taxon>Cyanobacteriota</taxon>
        <taxon>Cyanophyceae</taxon>
        <taxon>Synechococcales</taxon>
        <taxon>Merismopediaceae</taxon>
        <taxon>Synechocystis</taxon>
    </lineage>
</organism>
<dbReference type="EC" id="1.7.1.13" evidence="1"/>
<dbReference type="EMBL" id="BA000022">
    <property type="protein sequence ID" value="BAA10757.1"/>
    <property type="molecule type" value="Genomic_DNA"/>
</dbReference>
<dbReference type="PIR" id="S77065">
    <property type="entry name" value="S77065"/>
</dbReference>
<dbReference type="SMR" id="Q55978"/>
<dbReference type="FunCoup" id="Q55978">
    <property type="interactions" value="59"/>
</dbReference>
<dbReference type="STRING" id="1148.gene:10500261"/>
<dbReference type="PaxDb" id="1148-1006604"/>
<dbReference type="EnsemblBacteria" id="BAA10757">
    <property type="protein sequence ID" value="BAA10757"/>
    <property type="gene ID" value="BAA10757"/>
</dbReference>
<dbReference type="KEGG" id="syn:slr0711"/>
<dbReference type="eggNOG" id="COG0780">
    <property type="taxonomic scope" value="Bacteria"/>
</dbReference>
<dbReference type="InParanoid" id="Q55978"/>
<dbReference type="PhylomeDB" id="Q55978"/>
<dbReference type="UniPathway" id="UPA00392"/>
<dbReference type="Proteomes" id="UP000001425">
    <property type="component" value="Chromosome"/>
</dbReference>
<dbReference type="GO" id="GO:0005829">
    <property type="term" value="C:cytosol"/>
    <property type="evidence" value="ECO:0000318"/>
    <property type="project" value="GO_Central"/>
</dbReference>
<dbReference type="GO" id="GO:0033739">
    <property type="term" value="F:preQ1 synthase activity"/>
    <property type="evidence" value="ECO:0000318"/>
    <property type="project" value="GO_Central"/>
</dbReference>
<dbReference type="GO" id="GO:0008616">
    <property type="term" value="P:queuosine biosynthetic process"/>
    <property type="evidence" value="ECO:0000318"/>
    <property type="project" value="GO_Central"/>
</dbReference>
<dbReference type="GO" id="GO:0006400">
    <property type="term" value="P:tRNA modification"/>
    <property type="evidence" value="ECO:0007669"/>
    <property type="project" value="UniProtKB-UniRule"/>
</dbReference>
<dbReference type="Gene3D" id="3.30.1130.10">
    <property type="match status" value="1"/>
</dbReference>
<dbReference type="HAMAP" id="MF_00818">
    <property type="entry name" value="QueF_type1"/>
    <property type="match status" value="1"/>
</dbReference>
<dbReference type="InterPro" id="IPR043133">
    <property type="entry name" value="GTP-CH-I_C/QueF"/>
</dbReference>
<dbReference type="InterPro" id="IPR050084">
    <property type="entry name" value="NADPH_dep_7-cyano-7-deazaG_red"/>
</dbReference>
<dbReference type="InterPro" id="IPR029500">
    <property type="entry name" value="QueF"/>
</dbReference>
<dbReference type="InterPro" id="IPR016856">
    <property type="entry name" value="QueF_type1"/>
</dbReference>
<dbReference type="NCBIfam" id="TIGR03139">
    <property type="entry name" value="QueF-II"/>
    <property type="match status" value="1"/>
</dbReference>
<dbReference type="PANTHER" id="PTHR34354">
    <property type="entry name" value="NADPH-DEPENDENT 7-CYANO-7-DEAZAGUANINE REDUCTASE"/>
    <property type="match status" value="1"/>
</dbReference>
<dbReference type="PANTHER" id="PTHR34354:SF1">
    <property type="entry name" value="NADPH-DEPENDENT 7-CYANO-7-DEAZAGUANINE REDUCTASE"/>
    <property type="match status" value="1"/>
</dbReference>
<dbReference type="Pfam" id="PF14489">
    <property type="entry name" value="QueF"/>
    <property type="match status" value="1"/>
</dbReference>
<dbReference type="PIRSF" id="PIRSF027377">
    <property type="entry name" value="Nitrile_oxidored_QueF"/>
    <property type="match status" value="1"/>
</dbReference>
<dbReference type="SUPFAM" id="SSF55620">
    <property type="entry name" value="Tetrahydrobiopterin biosynthesis enzymes-like"/>
    <property type="match status" value="1"/>
</dbReference>
<sequence>MTETTITTSDNVEKYGEREIRDAQLITFPNPRPGRRYDVHITLPEFTCKCPFSGYPDFATLYLTYCPDQKVVELKSIKLYINSYRDRHIPHEEVTNQILDDFVAVANPLYARLKADFNPRGNVHTVIEVEYHQEKAS</sequence>
<protein>
    <recommendedName>
        <fullName evidence="1">NADPH-dependent 7-cyano-7-deazaguanine reductase</fullName>
        <ecNumber evidence="1">1.7.1.13</ecNumber>
    </recommendedName>
    <alternativeName>
        <fullName evidence="1">7-cyano-7-carbaguanine reductase</fullName>
    </alternativeName>
    <alternativeName>
        <fullName evidence="1">NADPH-dependent nitrile oxidoreductase</fullName>
    </alternativeName>
    <alternativeName>
        <fullName evidence="1">PreQ(0) reductase</fullName>
    </alternativeName>
</protein>
<proteinExistence type="inferred from homology"/>
<name>QUEF_SYNY3</name>